<comment type="function">
    <text evidence="1">ATPase required for the correct placement of the division site.</text>
</comment>
<comment type="subcellular location">
    <subcellularLocation>
        <location>Plastid</location>
        <location>Chloroplast</location>
    </subcellularLocation>
</comment>
<comment type="similarity">
    <text evidence="3">Belongs to the ParA family. MinD subfamily.</text>
</comment>
<gene>
    <name type="primary">minD</name>
</gene>
<reference key="1">
    <citation type="journal article" date="2000" name="Nature">
        <title>Ancestral chloroplast genome in Mesostigma viride reveals an early branch of green plant evolution.</title>
        <authorList>
            <person name="Lemieux C."/>
            <person name="Otis C."/>
            <person name="Turmel M."/>
        </authorList>
    </citation>
    <scope>NUCLEOTIDE SEQUENCE [LARGE SCALE GENOMIC DNA]</scope>
    <source>
        <strain>NIES-296 / KY-14 / CCMP 2046</strain>
    </source>
</reference>
<proteinExistence type="inferred from homology"/>
<sequence length="286" mass="31628">MIEQINKDGEKKNSTDTRTIVITSGKGGVGKTTTTANLGMSIARLGYKVALIDADVGLRNLDLLLGLENRVIYTAMEVFEGECCLDQALIRDKRWSNLALLAISKTRQRYHLTRRNMEMLVDSIRLRNYNFILIDCPAGIDVGFVNAVAPAEEAVVVTTPEITSIRDADRVAGLLEASGIYEVKLLVNRVRPDMIQKNDMLSVRDVQEMLGIPLLGAIPEDTNVIVSTNRGQPLVLNKKLTLSGISFENAARRLVGRKEYLVNLETGNKGLLKRVQQFLTGSEENV</sequence>
<keyword id="KW-0067">ATP-binding</keyword>
<keyword id="KW-0131">Cell cycle</keyword>
<keyword id="KW-0132">Cell division</keyword>
<keyword id="KW-0150">Chloroplast</keyword>
<keyword id="KW-0547">Nucleotide-binding</keyword>
<keyword id="KW-0934">Plastid</keyword>
<keyword id="KW-0717">Septation</keyword>
<geneLocation type="chloroplast"/>
<name>MIND_MESVI</name>
<feature type="chain" id="PRO_0000201978" description="Putative septum site-determining protein MinD">
    <location>
        <begin position="1"/>
        <end position="286"/>
    </location>
</feature>
<feature type="binding site" evidence="2">
    <location>
        <begin position="26"/>
        <end position="33"/>
    </location>
    <ligand>
        <name>ATP</name>
        <dbReference type="ChEBI" id="CHEBI:30616"/>
    </ligand>
</feature>
<protein>
    <recommendedName>
        <fullName>Putative septum site-determining protein MinD</fullName>
    </recommendedName>
</protein>
<dbReference type="EMBL" id="AF166114">
    <property type="protein sequence ID" value="AAF43873.1"/>
    <property type="molecule type" value="Genomic_DNA"/>
</dbReference>
<dbReference type="RefSeq" id="NP_038435.1">
    <property type="nucleotide sequence ID" value="NC_002186.1"/>
</dbReference>
<dbReference type="SMR" id="Q9MUM5"/>
<dbReference type="GeneID" id="800979"/>
<dbReference type="GO" id="GO:0009507">
    <property type="term" value="C:chloroplast"/>
    <property type="evidence" value="ECO:0007669"/>
    <property type="project" value="UniProtKB-SubCell"/>
</dbReference>
<dbReference type="GO" id="GO:0009898">
    <property type="term" value="C:cytoplasmic side of plasma membrane"/>
    <property type="evidence" value="ECO:0007669"/>
    <property type="project" value="TreeGrafter"/>
</dbReference>
<dbReference type="GO" id="GO:0005829">
    <property type="term" value="C:cytosol"/>
    <property type="evidence" value="ECO:0007669"/>
    <property type="project" value="TreeGrafter"/>
</dbReference>
<dbReference type="GO" id="GO:0005524">
    <property type="term" value="F:ATP binding"/>
    <property type="evidence" value="ECO:0007669"/>
    <property type="project" value="UniProtKB-KW"/>
</dbReference>
<dbReference type="GO" id="GO:0016887">
    <property type="term" value="F:ATP hydrolysis activity"/>
    <property type="evidence" value="ECO:0007669"/>
    <property type="project" value="InterPro"/>
</dbReference>
<dbReference type="GO" id="GO:0051301">
    <property type="term" value="P:cell division"/>
    <property type="evidence" value="ECO:0007669"/>
    <property type="project" value="UniProtKB-KW"/>
</dbReference>
<dbReference type="GO" id="GO:0051782">
    <property type="term" value="P:negative regulation of cell division"/>
    <property type="evidence" value="ECO:0007669"/>
    <property type="project" value="TreeGrafter"/>
</dbReference>
<dbReference type="CDD" id="cd02036">
    <property type="entry name" value="MinD"/>
    <property type="match status" value="1"/>
</dbReference>
<dbReference type="FunFam" id="3.40.50.300:FF:000068">
    <property type="entry name" value="Site-determining protein"/>
    <property type="match status" value="1"/>
</dbReference>
<dbReference type="Gene3D" id="3.40.50.300">
    <property type="entry name" value="P-loop containing nucleotide triphosphate hydrolases"/>
    <property type="match status" value="1"/>
</dbReference>
<dbReference type="InterPro" id="IPR002586">
    <property type="entry name" value="CobQ/CobB/MinD/ParA_Nub-bd_dom"/>
</dbReference>
<dbReference type="InterPro" id="IPR010223">
    <property type="entry name" value="MinD"/>
</dbReference>
<dbReference type="InterPro" id="IPR025501">
    <property type="entry name" value="MinD_FleN"/>
</dbReference>
<dbReference type="InterPro" id="IPR027417">
    <property type="entry name" value="P-loop_NTPase"/>
</dbReference>
<dbReference type="InterPro" id="IPR050625">
    <property type="entry name" value="ParA/MinD_ATPase"/>
</dbReference>
<dbReference type="NCBIfam" id="TIGR01968">
    <property type="entry name" value="minD_bact"/>
    <property type="match status" value="1"/>
</dbReference>
<dbReference type="PANTHER" id="PTHR43384:SF6">
    <property type="entry name" value="SEPTUM SITE-DETERMINING PROTEIN MIND HOMOLOG, CHLOROPLASTIC"/>
    <property type="match status" value="1"/>
</dbReference>
<dbReference type="PANTHER" id="PTHR43384">
    <property type="entry name" value="SEPTUM SITE-DETERMINING PROTEIN MIND HOMOLOG, CHLOROPLASTIC-RELATED"/>
    <property type="match status" value="1"/>
</dbReference>
<dbReference type="Pfam" id="PF01656">
    <property type="entry name" value="CbiA"/>
    <property type="match status" value="1"/>
</dbReference>
<dbReference type="PIRSF" id="PIRSF003092">
    <property type="entry name" value="MinD"/>
    <property type="match status" value="1"/>
</dbReference>
<dbReference type="SUPFAM" id="SSF52540">
    <property type="entry name" value="P-loop containing nucleoside triphosphate hydrolases"/>
    <property type="match status" value="1"/>
</dbReference>
<organism>
    <name type="scientific">Mesostigma viride</name>
    <name type="common">Green alga</name>
    <dbReference type="NCBI Taxonomy" id="41882"/>
    <lineage>
        <taxon>Eukaryota</taxon>
        <taxon>Viridiplantae</taxon>
        <taxon>Streptophyta</taxon>
        <taxon>Mesostigmatophyceae</taxon>
        <taxon>Mesostigmatales</taxon>
        <taxon>Mesostigmataceae</taxon>
        <taxon>Mesostigma</taxon>
    </lineage>
</organism>
<accession>Q9MUM5</accession>
<evidence type="ECO:0000250" key="1"/>
<evidence type="ECO:0000250" key="2">
    <source>
        <dbReference type="UniProtKB" id="Q72H90"/>
    </source>
</evidence>
<evidence type="ECO:0000305" key="3"/>